<gene>
    <name type="primary">Zmym5</name>
</gene>
<comment type="function">
    <text evidence="1">Functions as a transcriptional regulator.</text>
</comment>
<comment type="subunit">
    <text evidence="1">Interacts (via N-terminal 120 amino acid region) with ETV5 (via C-terminal).</text>
</comment>
<comment type="subcellular location">
    <subcellularLocation>
        <location evidence="3">Nucleus</location>
    </subcellularLocation>
</comment>
<comment type="sequence caution" evidence="3">
    <conflict type="miscellaneous discrepancy">
        <sequence resource="EMBL" id="BC023007"/>
    </conflict>
    <text>Chimeric cDNA.</text>
</comment>
<reference key="1">
    <citation type="journal article" date="2009" name="PLoS Biol.">
        <title>Lineage-specific biology revealed by a finished genome assembly of the mouse.</title>
        <authorList>
            <person name="Church D.M."/>
            <person name="Goodstadt L."/>
            <person name="Hillier L.W."/>
            <person name="Zody M.C."/>
            <person name="Goldstein S."/>
            <person name="She X."/>
            <person name="Bult C.J."/>
            <person name="Agarwala R."/>
            <person name="Cherry J.L."/>
            <person name="DiCuccio M."/>
            <person name="Hlavina W."/>
            <person name="Kapustin Y."/>
            <person name="Meric P."/>
            <person name="Maglott D."/>
            <person name="Birtle Z."/>
            <person name="Marques A.C."/>
            <person name="Graves T."/>
            <person name="Zhou S."/>
            <person name="Teague B."/>
            <person name="Potamousis K."/>
            <person name="Churas C."/>
            <person name="Place M."/>
            <person name="Herschleb J."/>
            <person name="Runnheim R."/>
            <person name="Forrest D."/>
            <person name="Amos-Landgraf J."/>
            <person name="Schwartz D.C."/>
            <person name="Cheng Z."/>
            <person name="Lindblad-Toh K."/>
            <person name="Eichler E.E."/>
            <person name="Ponting C.P."/>
        </authorList>
    </citation>
    <scope>NUCLEOTIDE SEQUENCE [LARGE SCALE GENOMIC DNA]</scope>
    <source>
        <strain>C57BL/6J</strain>
    </source>
</reference>
<reference key="2">
    <citation type="journal article" date="2005" name="Science">
        <title>The transcriptional landscape of the mammalian genome.</title>
        <authorList>
            <person name="Carninci P."/>
            <person name="Kasukawa T."/>
            <person name="Katayama S."/>
            <person name="Gough J."/>
            <person name="Frith M.C."/>
            <person name="Maeda N."/>
            <person name="Oyama R."/>
            <person name="Ravasi T."/>
            <person name="Lenhard B."/>
            <person name="Wells C."/>
            <person name="Kodzius R."/>
            <person name="Shimokawa K."/>
            <person name="Bajic V.B."/>
            <person name="Brenner S.E."/>
            <person name="Batalov S."/>
            <person name="Forrest A.R."/>
            <person name="Zavolan M."/>
            <person name="Davis M.J."/>
            <person name="Wilming L.G."/>
            <person name="Aidinis V."/>
            <person name="Allen J.E."/>
            <person name="Ambesi-Impiombato A."/>
            <person name="Apweiler R."/>
            <person name="Aturaliya R.N."/>
            <person name="Bailey T.L."/>
            <person name="Bansal M."/>
            <person name="Baxter L."/>
            <person name="Beisel K.W."/>
            <person name="Bersano T."/>
            <person name="Bono H."/>
            <person name="Chalk A.M."/>
            <person name="Chiu K.P."/>
            <person name="Choudhary V."/>
            <person name="Christoffels A."/>
            <person name="Clutterbuck D.R."/>
            <person name="Crowe M.L."/>
            <person name="Dalla E."/>
            <person name="Dalrymple B.P."/>
            <person name="de Bono B."/>
            <person name="Della Gatta G."/>
            <person name="di Bernardo D."/>
            <person name="Down T."/>
            <person name="Engstrom P."/>
            <person name="Fagiolini M."/>
            <person name="Faulkner G."/>
            <person name="Fletcher C.F."/>
            <person name="Fukushima T."/>
            <person name="Furuno M."/>
            <person name="Futaki S."/>
            <person name="Gariboldi M."/>
            <person name="Georgii-Hemming P."/>
            <person name="Gingeras T.R."/>
            <person name="Gojobori T."/>
            <person name="Green R.E."/>
            <person name="Gustincich S."/>
            <person name="Harbers M."/>
            <person name="Hayashi Y."/>
            <person name="Hensch T.K."/>
            <person name="Hirokawa N."/>
            <person name="Hill D."/>
            <person name="Huminiecki L."/>
            <person name="Iacono M."/>
            <person name="Ikeo K."/>
            <person name="Iwama A."/>
            <person name="Ishikawa T."/>
            <person name="Jakt M."/>
            <person name="Kanapin A."/>
            <person name="Katoh M."/>
            <person name="Kawasawa Y."/>
            <person name="Kelso J."/>
            <person name="Kitamura H."/>
            <person name="Kitano H."/>
            <person name="Kollias G."/>
            <person name="Krishnan S.P."/>
            <person name="Kruger A."/>
            <person name="Kummerfeld S.K."/>
            <person name="Kurochkin I.V."/>
            <person name="Lareau L.F."/>
            <person name="Lazarevic D."/>
            <person name="Lipovich L."/>
            <person name="Liu J."/>
            <person name="Liuni S."/>
            <person name="McWilliam S."/>
            <person name="Madan Babu M."/>
            <person name="Madera M."/>
            <person name="Marchionni L."/>
            <person name="Matsuda H."/>
            <person name="Matsuzawa S."/>
            <person name="Miki H."/>
            <person name="Mignone F."/>
            <person name="Miyake S."/>
            <person name="Morris K."/>
            <person name="Mottagui-Tabar S."/>
            <person name="Mulder N."/>
            <person name="Nakano N."/>
            <person name="Nakauchi H."/>
            <person name="Ng P."/>
            <person name="Nilsson R."/>
            <person name="Nishiguchi S."/>
            <person name="Nishikawa S."/>
            <person name="Nori F."/>
            <person name="Ohara O."/>
            <person name="Okazaki Y."/>
            <person name="Orlando V."/>
            <person name="Pang K.C."/>
            <person name="Pavan W.J."/>
            <person name="Pavesi G."/>
            <person name="Pesole G."/>
            <person name="Petrovsky N."/>
            <person name="Piazza S."/>
            <person name="Reed J."/>
            <person name="Reid J.F."/>
            <person name="Ring B.Z."/>
            <person name="Ringwald M."/>
            <person name="Rost B."/>
            <person name="Ruan Y."/>
            <person name="Salzberg S.L."/>
            <person name="Sandelin A."/>
            <person name="Schneider C."/>
            <person name="Schoenbach C."/>
            <person name="Sekiguchi K."/>
            <person name="Semple C.A."/>
            <person name="Seno S."/>
            <person name="Sessa L."/>
            <person name="Sheng Y."/>
            <person name="Shibata Y."/>
            <person name="Shimada H."/>
            <person name="Shimada K."/>
            <person name="Silva D."/>
            <person name="Sinclair B."/>
            <person name="Sperling S."/>
            <person name="Stupka E."/>
            <person name="Sugiura K."/>
            <person name="Sultana R."/>
            <person name="Takenaka Y."/>
            <person name="Taki K."/>
            <person name="Tammoja K."/>
            <person name="Tan S.L."/>
            <person name="Tang S."/>
            <person name="Taylor M.S."/>
            <person name="Tegner J."/>
            <person name="Teichmann S.A."/>
            <person name="Ueda H.R."/>
            <person name="van Nimwegen E."/>
            <person name="Verardo R."/>
            <person name="Wei C.L."/>
            <person name="Yagi K."/>
            <person name="Yamanishi H."/>
            <person name="Zabarovsky E."/>
            <person name="Zhu S."/>
            <person name="Zimmer A."/>
            <person name="Hide W."/>
            <person name="Bult C."/>
            <person name="Grimmond S.M."/>
            <person name="Teasdale R.D."/>
            <person name="Liu E.T."/>
            <person name="Brusic V."/>
            <person name="Quackenbush J."/>
            <person name="Wahlestedt C."/>
            <person name="Mattick J.S."/>
            <person name="Hume D.A."/>
            <person name="Kai C."/>
            <person name="Sasaki D."/>
            <person name="Tomaru Y."/>
            <person name="Fukuda S."/>
            <person name="Kanamori-Katayama M."/>
            <person name="Suzuki M."/>
            <person name="Aoki J."/>
            <person name="Arakawa T."/>
            <person name="Iida J."/>
            <person name="Imamura K."/>
            <person name="Itoh M."/>
            <person name="Kato T."/>
            <person name="Kawaji H."/>
            <person name="Kawagashira N."/>
            <person name="Kawashima T."/>
            <person name="Kojima M."/>
            <person name="Kondo S."/>
            <person name="Konno H."/>
            <person name="Nakano K."/>
            <person name="Ninomiya N."/>
            <person name="Nishio T."/>
            <person name="Okada M."/>
            <person name="Plessy C."/>
            <person name="Shibata K."/>
            <person name="Shiraki T."/>
            <person name="Suzuki S."/>
            <person name="Tagami M."/>
            <person name="Waki K."/>
            <person name="Watahiki A."/>
            <person name="Okamura-Oho Y."/>
            <person name="Suzuki H."/>
            <person name="Kawai J."/>
            <person name="Hayashizaki Y."/>
        </authorList>
    </citation>
    <scope>NUCLEOTIDE SEQUENCE [LARGE SCALE MRNA] OF 1-425</scope>
    <source>
        <strain>NOD</strain>
    </source>
</reference>
<reference key="3">
    <citation type="journal article" date="2004" name="Genome Res.">
        <title>The status, quality, and expansion of the NIH full-length cDNA project: the Mammalian Gene Collection (MGC).</title>
        <authorList>
            <consortium name="The MGC Project Team"/>
        </authorList>
    </citation>
    <scope>NUCLEOTIDE SEQUENCE [LARGE SCALE MRNA] OF 277-627</scope>
    <source>
        <tissue>Eye</tissue>
    </source>
</reference>
<organism>
    <name type="scientific">Mus musculus</name>
    <name type="common">Mouse</name>
    <dbReference type="NCBI Taxonomy" id="10090"/>
    <lineage>
        <taxon>Eukaryota</taxon>
        <taxon>Metazoa</taxon>
        <taxon>Chordata</taxon>
        <taxon>Craniata</taxon>
        <taxon>Vertebrata</taxon>
        <taxon>Euteleostomi</taxon>
        <taxon>Mammalia</taxon>
        <taxon>Eutheria</taxon>
        <taxon>Euarchontoglires</taxon>
        <taxon>Glires</taxon>
        <taxon>Rodentia</taxon>
        <taxon>Myomorpha</taxon>
        <taxon>Muroidea</taxon>
        <taxon>Muridae</taxon>
        <taxon>Murinae</taxon>
        <taxon>Mus</taxon>
        <taxon>Mus</taxon>
    </lineage>
</organism>
<protein>
    <recommendedName>
        <fullName>Zinc finger MYM-type protein 5</fullName>
    </recommendedName>
</protein>
<evidence type="ECO:0000250" key="1">
    <source>
        <dbReference type="UniProtKB" id="Q9UJ78"/>
    </source>
</evidence>
<evidence type="ECO:0000256" key="2">
    <source>
        <dbReference type="SAM" id="MobiDB-lite"/>
    </source>
</evidence>
<evidence type="ECO:0000305" key="3"/>
<accession>Q3U2E2</accession>
<accession>Q8R1W3</accession>
<proteinExistence type="evidence at transcript level"/>
<keyword id="KW-1017">Isopeptide bond</keyword>
<keyword id="KW-0479">Metal-binding</keyword>
<keyword id="KW-0539">Nucleus</keyword>
<keyword id="KW-1185">Reference proteome</keyword>
<keyword id="KW-0677">Repeat</keyword>
<keyword id="KW-0804">Transcription</keyword>
<keyword id="KW-0805">Transcription regulation</keyword>
<keyword id="KW-0832">Ubl conjugation</keyword>
<keyword id="KW-0862">Zinc</keyword>
<keyword id="KW-0863">Zinc-finger</keyword>
<sequence length="627" mass="70071">MEAHLADMESSGGPTSSLAGTSRNTHVEDDDVVFIESVQPPICAPAIPNERNFVFASSKHENPPGTDSTISPSWRDLTSQKGNLCETIVIDDEGDTDTNGGEEKNPTDFIEWGPNGNKSSTKNVDFPIASLSRSKTKTAVGPFNPGRIDVTDAFQNGRFAVHHNPDSWISQSASFPRNQKQQGVDSLSPVASLPKQIFQPSNQQPTKPVKVTCANCKKPLQKGQTAYQRKGSAHLFCSTTCLSSFSHKRTRKTRNVMCKKDSPVRTTTIVPPVESSKSLQGFYNASLSPYENCQSLRKEVFTKSRCIICNKLGEVRHEISVNSITHKLCSNNCFNEYRLTNGLIMNCCEQCSKYMPKSTGHSILITGQQKRFCCQNCADEYKEIMEAKSKLLLLQNRKRNAIREENEKRLRESSGTLSGNTGDIPEKKEKSSEIIKVAADCSLDTSSEEQNVNLPCSVAVISDTFKEQLGDKNSEELDMSILPSLDPGSWPRILNMKQREFLVKNNPPQIRNFNFPKDSAGKKFSETYYTRILPNGEKGTRPWLLYSASKDSVFCLYCRLFGEGKNQLRNENGCKDWHHLSHLLSKHDESEMHINNSVKYSKLKSDLENKTNEATEGGEDCVQLLYT</sequence>
<dbReference type="EMBL" id="AC154361">
    <property type="status" value="NOT_ANNOTATED_CDS"/>
    <property type="molecule type" value="Genomic_DNA"/>
</dbReference>
<dbReference type="EMBL" id="AK155333">
    <property type="protein sequence ID" value="BAE33199.1"/>
    <property type="molecule type" value="mRNA"/>
</dbReference>
<dbReference type="EMBL" id="BC023007">
    <property type="status" value="NOT_ANNOTATED_CDS"/>
    <property type="molecule type" value="mRNA"/>
</dbReference>
<dbReference type="CCDS" id="CCDS49505.1"/>
<dbReference type="RefSeq" id="NP_001240681.1">
    <property type="nucleotide sequence ID" value="NM_001253752.1"/>
</dbReference>
<dbReference type="RefSeq" id="NP_001240682.1">
    <property type="nucleotide sequence ID" value="NM_001253753.1"/>
</dbReference>
<dbReference type="RefSeq" id="NP_659091.3">
    <property type="nucleotide sequence ID" value="NM_144842.4"/>
</dbReference>
<dbReference type="RefSeq" id="XP_006518915.2">
    <property type="nucleotide sequence ID" value="XM_006518852.5"/>
</dbReference>
<dbReference type="RefSeq" id="XP_006518916.1">
    <property type="nucleotide sequence ID" value="XM_006518853.1"/>
</dbReference>
<dbReference type="RefSeq" id="XP_006518917.1">
    <property type="nucleotide sequence ID" value="XM_006518854.1"/>
</dbReference>
<dbReference type="RefSeq" id="XP_006518918.1">
    <property type="nucleotide sequence ID" value="XM_006518855.1"/>
</dbReference>
<dbReference type="RefSeq" id="XP_006518920.1">
    <property type="nucleotide sequence ID" value="XM_006518857.3"/>
</dbReference>
<dbReference type="RefSeq" id="XP_011243324.1">
    <property type="nucleotide sequence ID" value="XM_011245022.3"/>
</dbReference>
<dbReference type="RefSeq" id="XP_017171456.1">
    <property type="nucleotide sequence ID" value="XM_017315967.2"/>
</dbReference>
<dbReference type="RefSeq" id="XP_017171457.1">
    <property type="nucleotide sequence ID" value="XM_017315968.1"/>
</dbReference>
<dbReference type="RefSeq" id="XP_017171458.1">
    <property type="nucleotide sequence ID" value="XM_017315969.1"/>
</dbReference>
<dbReference type="RefSeq" id="XP_030103619.1">
    <property type="nucleotide sequence ID" value="XM_030247759.2"/>
</dbReference>
<dbReference type="RefSeq" id="XP_030103621.1">
    <property type="nucleotide sequence ID" value="XM_030247761.2"/>
</dbReference>
<dbReference type="RefSeq" id="XP_036014453.1">
    <property type="nucleotide sequence ID" value="XM_036158560.1"/>
</dbReference>
<dbReference type="SMR" id="Q3U2E2"/>
<dbReference type="BioGRID" id="230109">
    <property type="interactions" value="2"/>
</dbReference>
<dbReference type="FunCoup" id="Q3U2E2">
    <property type="interactions" value="1682"/>
</dbReference>
<dbReference type="IntAct" id="Q3U2E2">
    <property type="interactions" value="1"/>
</dbReference>
<dbReference type="STRING" id="10090.ENSMUSP00000134057"/>
<dbReference type="GlyGen" id="Q3U2E2">
    <property type="glycosylation" value="1 site"/>
</dbReference>
<dbReference type="iPTMnet" id="Q3U2E2"/>
<dbReference type="PhosphoSitePlus" id="Q3U2E2"/>
<dbReference type="jPOST" id="Q3U2E2"/>
<dbReference type="PaxDb" id="10090-ENSMUSP00000134057"/>
<dbReference type="PeptideAtlas" id="Q3U2E2"/>
<dbReference type="ProteomicsDB" id="299569"/>
<dbReference type="Antibodypedia" id="22270">
    <property type="antibodies" value="33 antibodies from 12 providers"/>
</dbReference>
<dbReference type="DNASU" id="219105"/>
<dbReference type="Ensembl" id="ENSMUST00000039812.16">
    <property type="protein sequence ID" value="ENSMUSP00000043625.10"/>
    <property type="gene ID" value="ENSMUSG00000040123.18"/>
</dbReference>
<dbReference type="Ensembl" id="ENSMUST00000111285.9">
    <property type="protein sequence ID" value="ENSMUSP00000106916.3"/>
    <property type="gene ID" value="ENSMUSG00000040123.18"/>
</dbReference>
<dbReference type="Ensembl" id="ENSMUST00000173954.3">
    <property type="protein sequence ID" value="ENSMUSP00000134057.2"/>
    <property type="gene ID" value="ENSMUSG00000040123.18"/>
</dbReference>
<dbReference type="GeneID" id="219105"/>
<dbReference type="KEGG" id="mmu:219105"/>
<dbReference type="UCSC" id="uc007ucl.2">
    <property type="organism name" value="mouse"/>
</dbReference>
<dbReference type="AGR" id="MGI:3041170"/>
<dbReference type="CTD" id="9205"/>
<dbReference type="MGI" id="MGI:3041170">
    <property type="gene designation" value="Zmym5"/>
</dbReference>
<dbReference type="VEuPathDB" id="HostDB:ENSMUSG00000040123"/>
<dbReference type="eggNOG" id="ENOG502S9U9">
    <property type="taxonomic scope" value="Eukaryota"/>
</dbReference>
<dbReference type="GeneTree" id="ENSGT00940000162379"/>
<dbReference type="HOGENOM" id="CLU_026638_1_0_1"/>
<dbReference type="InParanoid" id="Q3U2E2"/>
<dbReference type="OMA" id="QSCVNEY"/>
<dbReference type="OrthoDB" id="10025028at2759"/>
<dbReference type="PhylomeDB" id="Q3U2E2"/>
<dbReference type="BioGRID-ORCS" id="219105">
    <property type="hits" value="4 hits in 77 CRISPR screens"/>
</dbReference>
<dbReference type="ChiTaRS" id="Zmym5">
    <property type="organism name" value="mouse"/>
</dbReference>
<dbReference type="PRO" id="PR:Q3U2E2"/>
<dbReference type="Proteomes" id="UP000000589">
    <property type="component" value="Chromosome 14"/>
</dbReference>
<dbReference type="RNAct" id="Q3U2E2">
    <property type="molecule type" value="protein"/>
</dbReference>
<dbReference type="Bgee" id="ENSMUSG00000040123">
    <property type="expression patterns" value="Expressed in rostral migratory stream and 255 other cell types or tissues"/>
</dbReference>
<dbReference type="ExpressionAtlas" id="Q3U2E2">
    <property type="expression patterns" value="baseline and differential"/>
</dbReference>
<dbReference type="GO" id="GO:0005634">
    <property type="term" value="C:nucleus"/>
    <property type="evidence" value="ECO:0007669"/>
    <property type="project" value="UniProtKB-SubCell"/>
</dbReference>
<dbReference type="GO" id="GO:0008270">
    <property type="term" value="F:zinc ion binding"/>
    <property type="evidence" value="ECO:0007669"/>
    <property type="project" value="UniProtKB-KW"/>
</dbReference>
<dbReference type="GO" id="GO:0000122">
    <property type="term" value="P:negative regulation of transcription by RNA polymerase II"/>
    <property type="evidence" value="ECO:0007669"/>
    <property type="project" value="Ensembl"/>
</dbReference>
<dbReference type="InterPro" id="IPR011017">
    <property type="entry name" value="TRASH_dom"/>
</dbReference>
<dbReference type="InterPro" id="IPR010507">
    <property type="entry name" value="Znf_MYM"/>
</dbReference>
<dbReference type="InterPro" id="IPR051284">
    <property type="entry name" value="ZnF_MYMT-QRICH1"/>
</dbReference>
<dbReference type="PANTHER" id="PTHR45736">
    <property type="entry name" value="ZINC FINGER MYM-TYPE PROTEIN"/>
    <property type="match status" value="1"/>
</dbReference>
<dbReference type="PANTHER" id="PTHR45736:SF7">
    <property type="entry name" value="ZINC FINGER MYM-TYPE PROTEIN 5"/>
    <property type="match status" value="1"/>
</dbReference>
<dbReference type="Pfam" id="PF06467">
    <property type="entry name" value="zf-FCS"/>
    <property type="match status" value="3"/>
</dbReference>
<dbReference type="SMART" id="SM00746">
    <property type="entry name" value="TRASH"/>
    <property type="match status" value="3"/>
</dbReference>
<dbReference type="SUPFAM" id="SSF57716">
    <property type="entry name" value="Glucocorticoid receptor-like (DNA-binding domain)"/>
    <property type="match status" value="1"/>
</dbReference>
<feature type="chain" id="PRO_0000343663" description="Zinc finger MYM-type protein 5">
    <location>
        <begin position="1"/>
        <end position="627"/>
    </location>
</feature>
<feature type="zinc finger region" description="MYM-type 1">
    <location>
        <begin position="234"/>
        <end position="268"/>
    </location>
</feature>
<feature type="zinc finger region" description="MYM-type 2; degenerate">
    <location>
        <begin position="280"/>
        <end position="319"/>
    </location>
</feature>
<feature type="zinc finger region" description="MYM-type 4">
    <location>
        <begin position="326"/>
        <end position="354"/>
    </location>
</feature>
<feature type="zinc finger region" description="MYM-type 5">
    <location>
        <begin position="370"/>
        <end position="396"/>
    </location>
</feature>
<feature type="region of interest" description="Disordered" evidence="2">
    <location>
        <begin position="1"/>
        <end position="23"/>
    </location>
</feature>
<feature type="region of interest" description="Disordered" evidence="2">
    <location>
        <begin position="91"/>
        <end position="123"/>
    </location>
</feature>
<feature type="region of interest" description="Disordered" evidence="2">
    <location>
        <begin position="405"/>
        <end position="429"/>
    </location>
</feature>
<feature type="compositionally biased region" description="Polar residues" evidence="2">
    <location>
        <begin position="12"/>
        <end position="23"/>
    </location>
</feature>
<feature type="cross-link" description="Glycyl lysine isopeptide (Lys-Gly) (interchain with G-Cter in SUMO2)" evidence="1">
    <location>
        <position position="59"/>
    </location>
</feature>
<feature type="cross-link" description="Glycyl lysine isopeptide (Lys-Gly) (interchain with G-Cter in SUMO2)" evidence="1">
    <location>
        <position position="137"/>
    </location>
</feature>
<feature type="cross-link" description="Glycyl lysine isopeptide (Lys-Gly) (interchain with G-Cter in SUMO2)" evidence="1">
    <location>
        <position position="195"/>
    </location>
</feature>
<feature type="cross-link" description="Glycyl lysine isopeptide (Lys-Gly) (interchain with G-Cter in SUMO2)" evidence="1">
    <location>
        <position position="408"/>
    </location>
</feature>
<feature type="cross-link" description="Glycyl lysine isopeptide (Lys-Gly) (interchain with G-Cter in SUMO2)" evidence="1">
    <location>
        <position position="427"/>
    </location>
</feature>
<feature type="cross-link" description="Glycyl lysine isopeptide (Lys-Gly) (interchain with G-Cter in SUMO2)" evidence="1">
    <location>
        <position position="517"/>
    </location>
</feature>
<name>ZMYM5_MOUSE</name>